<protein>
    <recommendedName>
        <fullName>Putative disease resistance protein At1g50180</fullName>
    </recommendedName>
</protein>
<name>DRL4_ARATH</name>
<gene>
    <name type="ordered locus">At1g50180</name>
    <name type="ORF">F14I3.19</name>
</gene>
<comment type="function">
    <text evidence="1">Potential disease resistance protein.</text>
</comment>
<comment type="domain">
    <text evidence="1">The LRR repeats probably act as specificity determinant of pathogen recognition.</text>
</comment>
<comment type="similarity">
    <text evidence="3">Belongs to the disease resistance NB-LRR family.</text>
</comment>
<comment type="sequence caution" evidence="3">
    <conflict type="erroneous gene model prediction">
        <sequence resource="EMBL-CDS" id="AAD50046"/>
    </conflict>
</comment>
<comment type="online information" name="NIB-LRRS">
    <link uri="http://niblrrs.ucdavis.edu"/>
    <text>Functional and comparative genomics of disease resistance gene homologs</text>
</comment>
<reference key="1">
    <citation type="journal article" date="2000" name="Nature">
        <title>Sequence and analysis of chromosome 1 of the plant Arabidopsis thaliana.</title>
        <authorList>
            <person name="Theologis A."/>
            <person name="Ecker J.R."/>
            <person name="Palm C.J."/>
            <person name="Federspiel N.A."/>
            <person name="Kaul S."/>
            <person name="White O."/>
            <person name="Alonso J."/>
            <person name="Altafi H."/>
            <person name="Araujo R."/>
            <person name="Bowman C.L."/>
            <person name="Brooks S.Y."/>
            <person name="Buehler E."/>
            <person name="Chan A."/>
            <person name="Chao Q."/>
            <person name="Chen H."/>
            <person name="Cheuk R.F."/>
            <person name="Chin C.W."/>
            <person name="Chung M.K."/>
            <person name="Conn L."/>
            <person name="Conway A.B."/>
            <person name="Conway A.R."/>
            <person name="Creasy T.H."/>
            <person name="Dewar K."/>
            <person name="Dunn P."/>
            <person name="Etgu P."/>
            <person name="Feldblyum T.V."/>
            <person name="Feng J.-D."/>
            <person name="Fong B."/>
            <person name="Fujii C.Y."/>
            <person name="Gill J.E."/>
            <person name="Goldsmith A.D."/>
            <person name="Haas B."/>
            <person name="Hansen N.F."/>
            <person name="Hughes B."/>
            <person name="Huizar L."/>
            <person name="Hunter J.L."/>
            <person name="Jenkins J."/>
            <person name="Johnson-Hopson C."/>
            <person name="Khan S."/>
            <person name="Khaykin E."/>
            <person name="Kim C.J."/>
            <person name="Koo H.L."/>
            <person name="Kremenetskaia I."/>
            <person name="Kurtz D.B."/>
            <person name="Kwan A."/>
            <person name="Lam B."/>
            <person name="Langin-Hooper S."/>
            <person name="Lee A."/>
            <person name="Lee J.M."/>
            <person name="Lenz C.A."/>
            <person name="Li J.H."/>
            <person name="Li Y.-P."/>
            <person name="Lin X."/>
            <person name="Liu S.X."/>
            <person name="Liu Z.A."/>
            <person name="Luros J.S."/>
            <person name="Maiti R."/>
            <person name="Marziali A."/>
            <person name="Militscher J."/>
            <person name="Miranda M."/>
            <person name="Nguyen M."/>
            <person name="Nierman W.C."/>
            <person name="Osborne B.I."/>
            <person name="Pai G."/>
            <person name="Peterson J."/>
            <person name="Pham P.K."/>
            <person name="Rizzo M."/>
            <person name="Rooney T."/>
            <person name="Rowley D."/>
            <person name="Sakano H."/>
            <person name="Salzberg S.L."/>
            <person name="Schwartz J.R."/>
            <person name="Shinn P."/>
            <person name="Southwick A.M."/>
            <person name="Sun H."/>
            <person name="Tallon L.J."/>
            <person name="Tambunga G."/>
            <person name="Toriumi M.J."/>
            <person name="Town C.D."/>
            <person name="Utterback T."/>
            <person name="Van Aken S."/>
            <person name="Vaysberg M."/>
            <person name="Vysotskaia V.S."/>
            <person name="Walker M."/>
            <person name="Wu D."/>
            <person name="Yu G."/>
            <person name="Fraser C.M."/>
            <person name="Venter J.C."/>
            <person name="Davis R.W."/>
        </authorList>
    </citation>
    <scope>NUCLEOTIDE SEQUENCE [LARGE SCALE GENOMIC DNA]</scope>
    <source>
        <strain>cv. Columbia</strain>
    </source>
</reference>
<reference key="2">
    <citation type="journal article" date="2017" name="Plant J.">
        <title>Araport11: a complete reannotation of the Arabidopsis thaliana reference genome.</title>
        <authorList>
            <person name="Cheng C.Y."/>
            <person name="Krishnakumar V."/>
            <person name="Chan A.P."/>
            <person name="Thibaud-Nissen F."/>
            <person name="Schobel S."/>
            <person name="Town C.D."/>
        </authorList>
    </citation>
    <scope>GENOME REANNOTATION</scope>
    <source>
        <strain>cv. Columbia</strain>
    </source>
</reference>
<keyword id="KW-0067">ATP-binding</keyword>
<keyword id="KW-0175">Coiled coil</keyword>
<keyword id="KW-0433">Leucine-rich repeat</keyword>
<keyword id="KW-0547">Nucleotide-binding</keyword>
<keyword id="KW-0611">Plant defense</keyword>
<keyword id="KW-1185">Reference proteome</keyword>
<keyword id="KW-0677">Repeat</keyword>
<sequence>MAEAIVSVTVQKLGQLLLEEPLFLFGIGDQVKQLQDELKRLNCFLKDADEKQHESERVRNWVAGIREASYDAEDILEAFFLKAESRKQKGMKRVLRRLACILNEAVSLHSVGSEIREITSRLSKIAASMLDFGIKESMGREGLSLSDSLREQRQSFPYVVEHNLVGLEQSLEKLVNDLVSGGEKLRVTSICGMGGLGKTTLAKQIFHHHKVRRHFDRFAWVYVSQDCRRRHVWQDIFLNLSYKDENQRILSLRDEQLGEELHRFLKRNKCLIVLDDIWGKDAWDCLKHVFPHETGSEIILTTRNKEVALYADPRGVLHEPQLLTCEESWELLEKISLSGRENIEPMLVKKMEEIGKQIVVRCGGLPLAITVLGGLLATKSTWNEWQRVCENIKSYVSNGGSSNGSKNMLVADVLCLSYEYLPPHVKQCFLYFAHYPEDYEVHVGTLVSYCIAEGMVMPVKHTEAGTTVEDVGQDYLEELVKRSMVMVGRRDIVTSEVMTCRMHDLMREVCLQKAKQESFVQVIDSRDQDEAEAFISLSTNTSRRISVQLHGGAEEHHIKSLSQVSFRKMKLLRVLDLEGAQIEGGKLPDDVGDLIHLRNLSVRLTNVKELTSSIGNLKLMITLDLFVKGQLYIPNQLWDFPVGKCNPRDLLAMTSLRRLSINLSSQNTDFVVVSSLSKVLKRLRGLTINVPCEPMLPPVDVTQLVSAFTNLCELELFLKLEKLPGEQSFSSDLGALRLWQCGLVDDPFMVLEKLPNLKILQLFEGSFVGSKLCCSKNLENLEEWTVEDGAMMRLVTVELKCCNKLKSVPEGTRFLKNLQEVEIGNRTKAFKDKLISGGEDFYKVQHVPCVVFENCEL</sequence>
<feature type="chain" id="PRO_0000212736" description="Putative disease resistance protein At1g50180">
    <location>
        <begin position="1"/>
        <end position="857"/>
    </location>
</feature>
<feature type="domain" description="NB-ARC">
    <location>
        <begin position="148"/>
        <end position="461"/>
    </location>
</feature>
<feature type="repeat" description="LRR 1">
    <location>
        <begin position="653"/>
        <end position="678"/>
    </location>
</feature>
<feature type="repeat" description="LRR 2">
    <location>
        <begin position="680"/>
        <end position="703"/>
    </location>
</feature>
<feature type="repeat" description="LRR 3">
    <location>
        <begin position="754"/>
        <end position="780"/>
    </location>
</feature>
<feature type="repeat" description="LRR 4">
    <location>
        <begin position="791"/>
        <end position="816"/>
    </location>
</feature>
<feature type="coiled-coil region" evidence="2">
    <location>
        <begin position="27"/>
        <end position="60"/>
    </location>
</feature>
<feature type="binding site" evidence="2">
    <location>
        <begin position="192"/>
        <end position="199"/>
    </location>
    <ligand>
        <name>ATP</name>
        <dbReference type="ChEBI" id="CHEBI:30616"/>
    </ligand>
</feature>
<proteinExistence type="inferred from homology"/>
<evidence type="ECO:0000250" key="1"/>
<evidence type="ECO:0000255" key="2"/>
<evidence type="ECO:0000305" key="3"/>
<accession>Q9SX38</accession>
<accession>F4I4Y9</accession>
<organism>
    <name type="scientific">Arabidopsis thaliana</name>
    <name type="common">Mouse-ear cress</name>
    <dbReference type="NCBI Taxonomy" id="3702"/>
    <lineage>
        <taxon>Eukaryota</taxon>
        <taxon>Viridiplantae</taxon>
        <taxon>Streptophyta</taxon>
        <taxon>Embryophyta</taxon>
        <taxon>Tracheophyta</taxon>
        <taxon>Spermatophyta</taxon>
        <taxon>Magnoliopsida</taxon>
        <taxon>eudicotyledons</taxon>
        <taxon>Gunneridae</taxon>
        <taxon>Pentapetalae</taxon>
        <taxon>rosids</taxon>
        <taxon>malvids</taxon>
        <taxon>Brassicales</taxon>
        <taxon>Brassicaceae</taxon>
        <taxon>Camelineae</taxon>
        <taxon>Arabidopsis</taxon>
    </lineage>
</organism>
<dbReference type="EMBL" id="AC007980">
    <property type="protein sequence ID" value="AAD50046.1"/>
    <property type="status" value="ALT_SEQ"/>
    <property type="molecule type" value="Genomic_DNA"/>
</dbReference>
<dbReference type="EMBL" id="CP002684">
    <property type="protein sequence ID" value="AEE32522.1"/>
    <property type="molecule type" value="Genomic_DNA"/>
</dbReference>
<dbReference type="PIR" id="B96538">
    <property type="entry name" value="B96538"/>
</dbReference>
<dbReference type="RefSeq" id="NP_175437.1">
    <property type="nucleotide sequence ID" value="NM_103903.2"/>
</dbReference>
<dbReference type="SMR" id="Q9SX38"/>
<dbReference type="BioGRID" id="26665">
    <property type="interactions" value="1"/>
</dbReference>
<dbReference type="FunCoup" id="Q9SX38">
    <property type="interactions" value="16"/>
</dbReference>
<dbReference type="STRING" id="3702.Q9SX38"/>
<dbReference type="iPTMnet" id="Q9SX38"/>
<dbReference type="PaxDb" id="3702-AT1G50180.1"/>
<dbReference type="EnsemblPlants" id="AT1G50180.1">
    <property type="protein sequence ID" value="AT1G50180.1"/>
    <property type="gene ID" value="AT1G50180"/>
</dbReference>
<dbReference type="GeneID" id="841440"/>
<dbReference type="Gramene" id="AT1G50180.1">
    <property type="protein sequence ID" value="AT1G50180.1"/>
    <property type="gene ID" value="AT1G50180"/>
</dbReference>
<dbReference type="KEGG" id="ath:AT1G50180"/>
<dbReference type="Araport" id="AT1G50180"/>
<dbReference type="TAIR" id="AT1G50180">
    <property type="gene designation" value="CAR1"/>
</dbReference>
<dbReference type="eggNOG" id="KOG4658">
    <property type="taxonomic scope" value="Eukaryota"/>
</dbReference>
<dbReference type="HOGENOM" id="CLU_000837_25_4_1"/>
<dbReference type="InParanoid" id="Q9SX38"/>
<dbReference type="OMA" id="IKRFACI"/>
<dbReference type="PRO" id="PR:Q9SX38"/>
<dbReference type="Proteomes" id="UP000006548">
    <property type="component" value="Chromosome 1"/>
</dbReference>
<dbReference type="ExpressionAtlas" id="Q9SX38">
    <property type="expression patterns" value="baseline and differential"/>
</dbReference>
<dbReference type="GO" id="GO:0009506">
    <property type="term" value="C:plasmodesma"/>
    <property type="evidence" value="ECO:0007005"/>
    <property type="project" value="TAIR"/>
</dbReference>
<dbReference type="GO" id="GO:0043531">
    <property type="term" value="F:ADP binding"/>
    <property type="evidence" value="ECO:0007669"/>
    <property type="project" value="InterPro"/>
</dbReference>
<dbReference type="GO" id="GO:0005524">
    <property type="term" value="F:ATP binding"/>
    <property type="evidence" value="ECO:0007669"/>
    <property type="project" value="UniProtKB-KW"/>
</dbReference>
<dbReference type="GO" id="GO:0006952">
    <property type="term" value="P:defense response"/>
    <property type="evidence" value="ECO:0007669"/>
    <property type="project" value="UniProtKB-KW"/>
</dbReference>
<dbReference type="GO" id="GO:0051707">
    <property type="term" value="P:response to other organism"/>
    <property type="evidence" value="ECO:0007669"/>
    <property type="project" value="UniProtKB-ARBA"/>
</dbReference>
<dbReference type="CDD" id="cd14798">
    <property type="entry name" value="RX-CC_like"/>
    <property type="match status" value="1"/>
</dbReference>
<dbReference type="FunFam" id="1.20.5.4130:FF:000002">
    <property type="entry name" value="Disease resistance protein RPP8"/>
    <property type="match status" value="1"/>
</dbReference>
<dbReference type="FunFam" id="3.40.50.300:FF:001091">
    <property type="entry name" value="Probable disease resistance protein At1g61300"/>
    <property type="match status" value="1"/>
</dbReference>
<dbReference type="FunFam" id="1.10.10.10:FF:000322">
    <property type="entry name" value="Probable disease resistance protein At1g63360"/>
    <property type="match status" value="1"/>
</dbReference>
<dbReference type="FunFam" id="1.10.8.430:FF:000003">
    <property type="entry name" value="Probable disease resistance protein At5g66910"/>
    <property type="match status" value="1"/>
</dbReference>
<dbReference type="Gene3D" id="1.20.5.4130">
    <property type="match status" value="1"/>
</dbReference>
<dbReference type="Gene3D" id="1.10.8.430">
    <property type="entry name" value="Helical domain of apoptotic protease-activating factors"/>
    <property type="match status" value="1"/>
</dbReference>
<dbReference type="Gene3D" id="3.40.50.300">
    <property type="entry name" value="P-loop containing nucleotide triphosphate hydrolases"/>
    <property type="match status" value="1"/>
</dbReference>
<dbReference type="Gene3D" id="3.80.10.10">
    <property type="entry name" value="Ribonuclease Inhibitor"/>
    <property type="match status" value="1"/>
</dbReference>
<dbReference type="Gene3D" id="1.10.10.10">
    <property type="entry name" value="Winged helix-like DNA-binding domain superfamily/Winged helix DNA-binding domain"/>
    <property type="match status" value="1"/>
</dbReference>
<dbReference type="InterPro" id="IPR042197">
    <property type="entry name" value="Apaf_helical"/>
</dbReference>
<dbReference type="InterPro" id="IPR044974">
    <property type="entry name" value="Disease_R_plants"/>
</dbReference>
<dbReference type="InterPro" id="IPR032675">
    <property type="entry name" value="LRR_dom_sf"/>
</dbReference>
<dbReference type="InterPro" id="IPR055414">
    <property type="entry name" value="LRR_R13L4/SHOC2-like"/>
</dbReference>
<dbReference type="InterPro" id="IPR002182">
    <property type="entry name" value="NB-ARC"/>
</dbReference>
<dbReference type="InterPro" id="IPR027417">
    <property type="entry name" value="P-loop_NTPase"/>
</dbReference>
<dbReference type="InterPro" id="IPR038005">
    <property type="entry name" value="RX-like_CC"/>
</dbReference>
<dbReference type="InterPro" id="IPR041118">
    <property type="entry name" value="Rx_N"/>
</dbReference>
<dbReference type="InterPro" id="IPR036388">
    <property type="entry name" value="WH-like_DNA-bd_sf"/>
</dbReference>
<dbReference type="PANTHER" id="PTHR23155">
    <property type="entry name" value="DISEASE RESISTANCE PROTEIN RP"/>
    <property type="match status" value="1"/>
</dbReference>
<dbReference type="PANTHER" id="PTHR23155:SF1185">
    <property type="entry name" value="DISEASE RESISTANCE RPP8-LIKE PROTEIN 3-RELATED"/>
    <property type="match status" value="1"/>
</dbReference>
<dbReference type="Pfam" id="PF23598">
    <property type="entry name" value="LRR_14"/>
    <property type="match status" value="1"/>
</dbReference>
<dbReference type="Pfam" id="PF00931">
    <property type="entry name" value="NB-ARC"/>
    <property type="match status" value="1"/>
</dbReference>
<dbReference type="Pfam" id="PF18052">
    <property type="entry name" value="Rx_N"/>
    <property type="match status" value="1"/>
</dbReference>
<dbReference type="Pfam" id="PF23559">
    <property type="entry name" value="WH_DRP"/>
    <property type="match status" value="1"/>
</dbReference>
<dbReference type="PRINTS" id="PR00364">
    <property type="entry name" value="DISEASERSIST"/>
</dbReference>
<dbReference type="SUPFAM" id="SSF52058">
    <property type="entry name" value="L domain-like"/>
    <property type="match status" value="1"/>
</dbReference>
<dbReference type="SUPFAM" id="SSF52540">
    <property type="entry name" value="P-loop containing nucleoside triphosphate hydrolases"/>
    <property type="match status" value="1"/>
</dbReference>